<dbReference type="EC" id="1.1.1.267" evidence="1"/>
<dbReference type="EMBL" id="CP000570">
    <property type="protein sequence ID" value="ABN84122.1"/>
    <property type="molecule type" value="Genomic_DNA"/>
</dbReference>
<dbReference type="RefSeq" id="WP_004527290.1">
    <property type="nucleotide sequence ID" value="NC_009074.1"/>
</dbReference>
<dbReference type="SMR" id="A3NAU2"/>
<dbReference type="KEGG" id="bpd:BURPS668_2431"/>
<dbReference type="HOGENOM" id="CLU_035714_4_0_4"/>
<dbReference type="UniPathway" id="UPA00056">
    <property type="reaction ID" value="UER00092"/>
</dbReference>
<dbReference type="GO" id="GO:0030604">
    <property type="term" value="F:1-deoxy-D-xylulose-5-phosphate reductoisomerase activity"/>
    <property type="evidence" value="ECO:0007669"/>
    <property type="project" value="UniProtKB-UniRule"/>
</dbReference>
<dbReference type="GO" id="GO:0030145">
    <property type="term" value="F:manganese ion binding"/>
    <property type="evidence" value="ECO:0007669"/>
    <property type="project" value="TreeGrafter"/>
</dbReference>
<dbReference type="GO" id="GO:0070402">
    <property type="term" value="F:NADPH binding"/>
    <property type="evidence" value="ECO:0007669"/>
    <property type="project" value="InterPro"/>
</dbReference>
<dbReference type="GO" id="GO:0051484">
    <property type="term" value="P:isopentenyl diphosphate biosynthetic process, methylerythritol 4-phosphate pathway involved in terpenoid biosynthetic process"/>
    <property type="evidence" value="ECO:0007669"/>
    <property type="project" value="TreeGrafter"/>
</dbReference>
<dbReference type="FunFam" id="1.10.1740.10:FF:000004">
    <property type="entry name" value="1-deoxy-D-xylulose 5-phosphate reductoisomerase"/>
    <property type="match status" value="1"/>
</dbReference>
<dbReference type="FunFam" id="3.40.50.720:FF:000045">
    <property type="entry name" value="1-deoxy-D-xylulose 5-phosphate reductoisomerase"/>
    <property type="match status" value="1"/>
</dbReference>
<dbReference type="Gene3D" id="1.10.1740.10">
    <property type="match status" value="1"/>
</dbReference>
<dbReference type="Gene3D" id="3.40.50.720">
    <property type="entry name" value="NAD(P)-binding Rossmann-like Domain"/>
    <property type="match status" value="1"/>
</dbReference>
<dbReference type="HAMAP" id="MF_00183">
    <property type="entry name" value="DXP_reductoisom"/>
    <property type="match status" value="1"/>
</dbReference>
<dbReference type="InterPro" id="IPR003821">
    <property type="entry name" value="DXP_reductoisomerase"/>
</dbReference>
<dbReference type="InterPro" id="IPR013644">
    <property type="entry name" value="DXP_reductoisomerase_C"/>
</dbReference>
<dbReference type="InterPro" id="IPR013512">
    <property type="entry name" value="DXP_reductoisomerase_N"/>
</dbReference>
<dbReference type="InterPro" id="IPR026877">
    <property type="entry name" value="DXPR_C"/>
</dbReference>
<dbReference type="InterPro" id="IPR036169">
    <property type="entry name" value="DXPR_C_sf"/>
</dbReference>
<dbReference type="InterPro" id="IPR036291">
    <property type="entry name" value="NAD(P)-bd_dom_sf"/>
</dbReference>
<dbReference type="NCBIfam" id="TIGR00243">
    <property type="entry name" value="Dxr"/>
    <property type="match status" value="1"/>
</dbReference>
<dbReference type="NCBIfam" id="NF003938">
    <property type="entry name" value="PRK05447.1-1"/>
    <property type="match status" value="1"/>
</dbReference>
<dbReference type="NCBIfam" id="NF009114">
    <property type="entry name" value="PRK12464.1"/>
    <property type="match status" value="1"/>
</dbReference>
<dbReference type="PANTHER" id="PTHR30525">
    <property type="entry name" value="1-DEOXY-D-XYLULOSE 5-PHOSPHATE REDUCTOISOMERASE"/>
    <property type="match status" value="1"/>
</dbReference>
<dbReference type="PANTHER" id="PTHR30525:SF0">
    <property type="entry name" value="1-DEOXY-D-XYLULOSE 5-PHOSPHATE REDUCTOISOMERASE, CHLOROPLASTIC"/>
    <property type="match status" value="1"/>
</dbReference>
<dbReference type="Pfam" id="PF08436">
    <property type="entry name" value="DXP_redisom_C"/>
    <property type="match status" value="1"/>
</dbReference>
<dbReference type="Pfam" id="PF02670">
    <property type="entry name" value="DXP_reductoisom"/>
    <property type="match status" value="1"/>
</dbReference>
<dbReference type="Pfam" id="PF13288">
    <property type="entry name" value="DXPR_C"/>
    <property type="match status" value="1"/>
</dbReference>
<dbReference type="PIRSF" id="PIRSF006205">
    <property type="entry name" value="Dxp_reductismrs"/>
    <property type="match status" value="1"/>
</dbReference>
<dbReference type="SUPFAM" id="SSF69055">
    <property type="entry name" value="1-deoxy-D-xylulose-5-phosphate reductoisomerase, C-terminal domain"/>
    <property type="match status" value="1"/>
</dbReference>
<dbReference type="SUPFAM" id="SSF55347">
    <property type="entry name" value="Glyceraldehyde-3-phosphate dehydrogenase-like, C-terminal domain"/>
    <property type="match status" value="1"/>
</dbReference>
<dbReference type="SUPFAM" id="SSF51735">
    <property type="entry name" value="NAD(P)-binding Rossmann-fold domains"/>
    <property type="match status" value="1"/>
</dbReference>
<name>DXR_BURP6</name>
<keyword id="KW-0414">Isoprene biosynthesis</keyword>
<keyword id="KW-0464">Manganese</keyword>
<keyword id="KW-0479">Metal-binding</keyword>
<keyword id="KW-0521">NADP</keyword>
<keyword id="KW-0560">Oxidoreductase</keyword>
<organism>
    <name type="scientific">Burkholderia pseudomallei (strain 668)</name>
    <dbReference type="NCBI Taxonomy" id="320373"/>
    <lineage>
        <taxon>Bacteria</taxon>
        <taxon>Pseudomonadati</taxon>
        <taxon>Pseudomonadota</taxon>
        <taxon>Betaproteobacteria</taxon>
        <taxon>Burkholderiales</taxon>
        <taxon>Burkholderiaceae</taxon>
        <taxon>Burkholderia</taxon>
        <taxon>pseudomallei group</taxon>
    </lineage>
</organism>
<sequence>MQKRLTLLGSTGSIGDSTLDVVARHPERFAVHALTAHRNGEKLVAQCLRFAPDVAVVGDAETAARVEAQLRAAGSRTQVAYGKQALVDVSKSDGCDTVVAAIVGAAGLAPSLAAARAGKRILLANKEALVMSGAIFMDAVRDHGAILLPVDSEHNAIFQCMPRDAAEHGGIAKIIVTASGGPFRTREPATLASVTPDEACKHPNWVMGRKISVDSATMMNKGLEVIEAHWLFGLPSERIDVLIHPQSVIHSLVSYRDGSVLAQLGNPDMRTPIAHALAFPERVDAGVAQLDLAQIATLTFEKPDYARFPCLALAIDALEAGGVASAALNAANEIAVDAFLSRRIRFTAIAQTVGAVLDGLSNRTPGGLDDVIEADAAARRAATAFIGKLPAPGVERAA</sequence>
<proteinExistence type="inferred from homology"/>
<feature type="chain" id="PRO_1000020231" description="1-deoxy-D-xylulose 5-phosphate reductoisomerase">
    <location>
        <begin position="1"/>
        <end position="398"/>
    </location>
</feature>
<feature type="binding site" evidence="1">
    <location>
        <position position="11"/>
    </location>
    <ligand>
        <name>NADPH</name>
        <dbReference type="ChEBI" id="CHEBI:57783"/>
    </ligand>
</feature>
<feature type="binding site" evidence="1">
    <location>
        <position position="12"/>
    </location>
    <ligand>
        <name>NADPH</name>
        <dbReference type="ChEBI" id="CHEBI:57783"/>
    </ligand>
</feature>
<feature type="binding site" evidence="1">
    <location>
        <position position="13"/>
    </location>
    <ligand>
        <name>NADPH</name>
        <dbReference type="ChEBI" id="CHEBI:57783"/>
    </ligand>
</feature>
<feature type="binding site" evidence="1">
    <location>
        <position position="14"/>
    </location>
    <ligand>
        <name>NADPH</name>
        <dbReference type="ChEBI" id="CHEBI:57783"/>
    </ligand>
</feature>
<feature type="binding site" evidence="1">
    <location>
        <position position="38"/>
    </location>
    <ligand>
        <name>NADPH</name>
        <dbReference type="ChEBI" id="CHEBI:57783"/>
    </ligand>
</feature>
<feature type="binding site" evidence="1">
    <location>
        <position position="39"/>
    </location>
    <ligand>
        <name>NADPH</name>
        <dbReference type="ChEBI" id="CHEBI:57783"/>
    </ligand>
</feature>
<feature type="binding site" evidence="1">
    <location>
        <position position="125"/>
    </location>
    <ligand>
        <name>NADPH</name>
        <dbReference type="ChEBI" id="CHEBI:57783"/>
    </ligand>
</feature>
<feature type="binding site" evidence="1">
    <location>
        <position position="126"/>
    </location>
    <ligand>
        <name>1-deoxy-D-xylulose 5-phosphate</name>
        <dbReference type="ChEBI" id="CHEBI:57792"/>
    </ligand>
</feature>
<feature type="binding site" evidence="1">
    <location>
        <position position="127"/>
    </location>
    <ligand>
        <name>NADPH</name>
        <dbReference type="ChEBI" id="CHEBI:57783"/>
    </ligand>
</feature>
<feature type="binding site" evidence="1">
    <location>
        <position position="151"/>
    </location>
    <ligand>
        <name>Mn(2+)</name>
        <dbReference type="ChEBI" id="CHEBI:29035"/>
    </ligand>
</feature>
<feature type="binding site" evidence="1">
    <location>
        <position position="152"/>
    </location>
    <ligand>
        <name>1-deoxy-D-xylulose 5-phosphate</name>
        <dbReference type="ChEBI" id="CHEBI:57792"/>
    </ligand>
</feature>
<feature type="binding site" evidence="1">
    <location>
        <position position="153"/>
    </location>
    <ligand>
        <name>1-deoxy-D-xylulose 5-phosphate</name>
        <dbReference type="ChEBI" id="CHEBI:57792"/>
    </ligand>
</feature>
<feature type="binding site" evidence="1">
    <location>
        <position position="153"/>
    </location>
    <ligand>
        <name>Mn(2+)</name>
        <dbReference type="ChEBI" id="CHEBI:29035"/>
    </ligand>
</feature>
<feature type="binding site" evidence="1">
    <location>
        <position position="179"/>
    </location>
    <ligand>
        <name>1-deoxy-D-xylulose 5-phosphate</name>
        <dbReference type="ChEBI" id="CHEBI:57792"/>
    </ligand>
</feature>
<feature type="binding site" evidence="1">
    <location>
        <position position="202"/>
    </location>
    <ligand>
        <name>1-deoxy-D-xylulose 5-phosphate</name>
        <dbReference type="ChEBI" id="CHEBI:57792"/>
    </ligand>
</feature>
<feature type="binding site" evidence="1">
    <location>
        <position position="208"/>
    </location>
    <ligand>
        <name>NADPH</name>
        <dbReference type="ChEBI" id="CHEBI:57783"/>
    </ligand>
</feature>
<feature type="binding site" evidence="1">
    <location>
        <position position="215"/>
    </location>
    <ligand>
        <name>1-deoxy-D-xylulose 5-phosphate</name>
        <dbReference type="ChEBI" id="CHEBI:57792"/>
    </ligand>
</feature>
<feature type="binding site" evidence="1">
    <location>
        <position position="220"/>
    </location>
    <ligand>
        <name>1-deoxy-D-xylulose 5-phosphate</name>
        <dbReference type="ChEBI" id="CHEBI:57792"/>
    </ligand>
</feature>
<feature type="binding site" evidence="1">
    <location>
        <position position="221"/>
    </location>
    <ligand>
        <name>1-deoxy-D-xylulose 5-phosphate</name>
        <dbReference type="ChEBI" id="CHEBI:57792"/>
    </ligand>
</feature>
<feature type="binding site" evidence="1">
    <location>
        <position position="224"/>
    </location>
    <ligand>
        <name>1-deoxy-D-xylulose 5-phosphate</name>
        <dbReference type="ChEBI" id="CHEBI:57792"/>
    </ligand>
</feature>
<feature type="binding site" evidence="1">
    <location>
        <position position="224"/>
    </location>
    <ligand>
        <name>Mn(2+)</name>
        <dbReference type="ChEBI" id="CHEBI:29035"/>
    </ligand>
</feature>
<protein>
    <recommendedName>
        <fullName evidence="1">1-deoxy-D-xylulose 5-phosphate reductoisomerase</fullName>
        <shortName evidence="1">DXP reductoisomerase</shortName>
        <ecNumber evidence="1">1.1.1.267</ecNumber>
    </recommendedName>
    <alternativeName>
        <fullName evidence="1">1-deoxyxylulose-5-phosphate reductoisomerase</fullName>
    </alternativeName>
    <alternativeName>
        <fullName evidence="1">2-C-methyl-D-erythritol 4-phosphate synthase</fullName>
    </alternativeName>
</protein>
<gene>
    <name evidence="1" type="primary">dxr</name>
    <name type="ordered locus">BURPS668_2431</name>
</gene>
<evidence type="ECO:0000255" key="1">
    <source>
        <dbReference type="HAMAP-Rule" id="MF_00183"/>
    </source>
</evidence>
<reference key="1">
    <citation type="journal article" date="2010" name="Genome Biol. Evol.">
        <title>Continuing evolution of Burkholderia mallei through genome reduction and large-scale rearrangements.</title>
        <authorList>
            <person name="Losada L."/>
            <person name="Ronning C.M."/>
            <person name="DeShazer D."/>
            <person name="Woods D."/>
            <person name="Fedorova N."/>
            <person name="Kim H.S."/>
            <person name="Shabalina S.A."/>
            <person name="Pearson T.R."/>
            <person name="Brinkac L."/>
            <person name="Tan P."/>
            <person name="Nandi T."/>
            <person name="Crabtree J."/>
            <person name="Badger J."/>
            <person name="Beckstrom-Sternberg S."/>
            <person name="Saqib M."/>
            <person name="Schutzer S.E."/>
            <person name="Keim P."/>
            <person name="Nierman W.C."/>
        </authorList>
    </citation>
    <scope>NUCLEOTIDE SEQUENCE [LARGE SCALE GENOMIC DNA]</scope>
    <source>
        <strain>668</strain>
    </source>
</reference>
<comment type="function">
    <text evidence="1">Catalyzes the NADPH-dependent rearrangement and reduction of 1-deoxy-D-xylulose-5-phosphate (DXP) to 2-C-methyl-D-erythritol 4-phosphate (MEP).</text>
</comment>
<comment type="catalytic activity">
    <reaction evidence="1">
        <text>2-C-methyl-D-erythritol 4-phosphate + NADP(+) = 1-deoxy-D-xylulose 5-phosphate + NADPH + H(+)</text>
        <dbReference type="Rhea" id="RHEA:13717"/>
        <dbReference type="ChEBI" id="CHEBI:15378"/>
        <dbReference type="ChEBI" id="CHEBI:57783"/>
        <dbReference type="ChEBI" id="CHEBI:57792"/>
        <dbReference type="ChEBI" id="CHEBI:58262"/>
        <dbReference type="ChEBI" id="CHEBI:58349"/>
        <dbReference type="EC" id="1.1.1.267"/>
    </reaction>
    <physiologicalReaction direction="right-to-left" evidence="1">
        <dbReference type="Rhea" id="RHEA:13719"/>
    </physiologicalReaction>
</comment>
<comment type="cofactor">
    <cofactor evidence="1">
        <name>Mg(2+)</name>
        <dbReference type="ChEBI" id="CHEBI:18420"/>
    </cofactor>
    <cofactor evidence="1">
        <name>Mn(2+)</name>
        <dbReference type="ChEBI" id="CHEBI:29035"/>
    </cofactor>
</comment>
<comment type="pathway">
    <text evidence="1">Isoprenoid biosynthesis; isopentenyl diphosphate biosynthesis via DXP pathway; isopentenyl diphosphate from 1-deoxy-D-xylulose 5-phosphate: step 1/6.</text>
</comment>
<comment type="similarity">
    <text evidence="1">Belongs to the DXR family.</text>
</comment>
<accession>A3NAU2</accession>